<keyword id="KW-0066">ATP synthesis</keyword>
<keyword id="KW-0067">ATP-binding</keyword>
<keyword id="KW-0997">Cell inner membrane</keyword>
<keyword id="KW-1003">Cell membrane</keyword>
<keyword id="KW-0139">CF(1)</keyword>
<keyword id="KW-0375">Hydrogen ion transport</keyword>
<keyword id="KW-0406">Ion transport</keyword>
<keyword id="KW-0472">Membrane</keyword>
<keyword id="KW-0547">Nucleotide-binding</keyword>
<keyword id="KW-1185">Reference proteome</keyword>
<keyword id="KW-1278">Translocase</keyword>
<keyword id="KW-0813">Transport</keyword>
<comment type="function">
    <text evidence="1">Produces ATP from ADP in the presence of a proton gradient across the membrane. The catalytic sites are hosted primarily by the beta subunits.</text>
</comment>
<comment type="catalytic activity">
    <reaction evidence="1">
        <text>ATP + H2O + 4 H(+)(in) = ADP + phosphate + 5 H(+)(out)</text>
        <dbReference type="Rhea" id="RHEA:57720"/>
        <dbReference type="ChEBI" id="CHEBI:15377"/>
        <dbReference type="ChEBI" id="CHEBI:15378"/>
        <dbReference type="ChEBI" id="CHEBI:30616"/>
        <dbReference type="ChEBI" id="CHEBI:43474"/>
        <dbReference type="ChEBI" id="CHEBI:456216"/>
        <dbReference type="EC" id="7.1.2.2"/>
    </reaction>
</comment>
<comment type="subunit">
    <text evidence="1">F-type ATPases have 2 components, CF(1) - the catalytic core - and CF(0) - the membrane proton channel. CF(1) has five subunits: alpha(3), beta(3), gamma(1), delta(1), epsilon(1). CF(0) has three main subunits: a(1), b(2) and c(9-12). The alpha and beta chains form an alternating ring which encloses part of the gamma chain. CF(1) is attached to CF(0) by a central stalk formed by the gamma and epsilon chains, while a peripheral stalk is formed by the delta and b chains.</text>
</comment>
<comment type="subcellular location">
    <subcellularLocation>
        <location evidence="1">Cell inner membrane</location>
        <topology evidence="1">Peripheral membrane protein</topology>
    </subcellularLocation>
</comment>
<comment type="similarity">
    <text evidence="1">Belongs to the ATPase alpha/beta chains family.</text>
</comment>
<evidence type="ECO:0000255" key="1">
    <source>
        <dbReference type="HAMAP-Rule" id="MF_01347"/>
    </source>
</evidence>
<proteinExistence type="inferred from homology"/>
<protein>
    <recommendedName>
        <fullName evidence="1">ATP synthase subunit beta</fullName>
        <ecNumber evidence="1">7.1.2.2</ecNumber>
    </recommendedName>
    <alternativeName>
        <fullName evidence="1">ATP synthase F1 sector subunit beta</fullName>
    </alternativeName>
    <alternativeName>
        <fullName evidence="1">F-ATPase subunit beta</fullName>
    </alternativeName>
</protein>
<name>ATPB_CAMHC</name>
<reference key="1">
    <citation type="submission" date="2007-07" db="EMBL/GenBank/DDBJ databases">
        <title>Complete genome sequence of Campylobacter hominis ATCC BAA-381, a commensal isolated from the human gastrointestinal tract.</title>
        <authorList>
            <person name="Fouts D.E."/>
            <person name="Mongodin E.F."/>
            <person name="Puiu D."/>
            <person name="Sebastian Y."/>
            <person name="Miller W.G."/>
            <person name="Mandrell R.E."/>
            <person name="Nelson K.E."/>
        </authorList>
    </citation>
    <scope>NUCLEOTIDE SEQUENCE [LARGE SCALE GENOMIC DNA]</scope>
    <source>
        <strain>ATCC BAA-381 / DSM 21671 / CCUG 45161 / LMG 19568 / NCTC 13146 / CH001A</strain>
    </source>
</reference>
<feature type="chain" id="PRO_0000339504" description="ATP synthase subunit beta">
    <location>
        <begin position="1"/>
        <end position="465"/>
    </location>
</feature>
<feature type="binding site" evidence="1">
    <location>
        <begin position="152"/>
        <end position="159"/>
    </location>
    <ligand>
        <name>ATP</name>
        <dbReference type="ChEBI" id="CHEBI:30616"/>
    </ligand>
</feature>
<sequence>MKGIISQVMGPVVDVDFKDYLPKINEAIEVKYDVEGIQKRLVLEVAAHLGDNKVRTIAMDMSDGLRRGLEAEALGAPISVPVGKKVLGRIFNVTGDLIDEGEPEDFETRWSIHRDPPSFEDQSTKSEIFETGIKVVDLLAPYAKGGKVGLFGGAGVGKTVIIMELIHNVAFKHNGYSVFAGVGERTREGNDLYNEMKESGVLDKVALTYGQMNEPPGARNRIALTGLTMAEYFRDELGLDVLMFIDNIFRFSQSGSEMSALLGRIPSAVGYQPTLASEMGKLQERITSTKKGSITSVQAVYVPADDLTDPAPATVFAHLDATTVLNRSIAEKGIYPAVDPLNSTSRMLDPQIVGEEHYKIARGVQAVLQKYKDLQDIIAILGMDELSEEDKLVVERARKIEKYLSQPFFVAEVFTGSPGKYISLEDTIAGFKGILEGKYDDLPENAFYMVGSIDEVLAKAEKMKA</sequence>
<gene>
    <name evidence="1" type="primary">atpD</name>
    <name type="ordered locus">CHAB381_0687</name>
</gene>
<dbReference type="EC" id="7.1.2.2" evidence="1"/>
<dbReference type="EMBL" id="CP000776">
    <property type="protein sequence ID" value="ABS51274.1"/>
    <property type="molecule type" value="Genomic_DNA"/>
</dbReference>
<dbReference type="RefSeq" id="WP_012108555.1">
    <property type="nucleotide sequence ID" value="NC_009714.1"/>
</dbReference>
<dbReference type="SMR" id="A7I177"/>
<dbReference type="STRING" id="360107.CHAB381_0687"/>
<dbReference type="KEGG" id="cha:CHAB381_0687"/>
<dbReference type="eggNOG" id="COG0055">
    <property type="taxonomic scope" value="Bacteria"/>
</dbReference>
<dbReference type="HOGENOM" id="CLU_022398_0_2_7"/>
<dbReference type="OrthoDB" id="9801639at2"/>
<dbReference type="Proteomes" id="UP000002407">
    <property type="component" value="Chromosome"/>
</dbReference>
<dbReference type="GO" id="GO:0005886">
    <property type="term" value="C:plasma membrane"/>
    <property type="evidence" value="ECO:0007669"/>
    <property type="project" value="UniProtKB-SubCell"/>
</dbReference>
<dbReference type="GO" id="GO:0045259">
    <property type="term" value="C:proton-transporting ATP synthase complex"/>
    <property type="evidence" value="ECO:0007669"/>
    <property type="project" value="UniProtKB-KW"/>
</dbReference>
<dbReference type="GO" id="GO:0005524">
    <property type="term" value="F:ATP binding"/>
    <property type="evidence" value="ECO:0007669"/>
    <property type="project" value="UniProtKB-UniRule"/>
</dbReference>
<dbReference type="GO" id="GO:0016887">
    <property type="term" value="F:ATP hydrolysis activity"/>
    <property type="evidence" value="ECO:0007669"/>
    <property type="project" value="InterPro"/>
</dbReference>
<dbReference type="GO" id="GO:0046933">
    <property type="term" value="F:proton-transporting ATP synthase activity, rotational mechanism"/>
    <property type="evidence" value="ECO:0007669"/>
    <property type="project" value="UniProtKB-UniRule"/>
</dbReference>
<dbReference type="CDD" id="cd18110">
    <property type="entry name" value="ATP-synt_F1_beta_C"/>
    <property type="match status" value="1"/>
</dbReference>
<dbReference type="CDD" id="cd18115">
    <property type="entry name" value="ATP-synt_F1_beta_N"/>
    <property type="match status" value="1"/>
</dbReference>
<dbReference type="CDD" id="cd01133">
    <property type="entry name" value="F1-ATPase_beta_CD"/>
    <property type="match status" value="1"/>
</dbReference>
<dbReference type="FunFam" id="1.10.1140.10:FF:000001">
    <property type="entry name" value="ATP synthase subunit beta"/>
    <property type="match status" value="1"/>
</dbReference>
<dbReference type="FunFam" id="3.40.50.300:FF:000004">
    <property type="entry name" value="ATP synthase subunit beta"/>
    <property type="match status" value="1"/>
</dbReference>
<dbReference type="Gene3D" id="2.40.10.170">
    <property type="match status" value="1"/>
</dbReference>
<dbReference type="Gene3D" id="1.10.1140.10">
    <property type="entry name" value="Bovine Mitochondrial F1-atpase, Atp Synthase Beta Chain, Chain D, domain 3"/>
    <property type="match status" value="1"/>
</dbReference>
<dbReference type="Gene3D" id="3.40.50.300">
    <property type="entry name" value="P-loop containing nucleotide triphosphate hydrolases"/>
    <property type="match status" value="1"/>
</dbReference>
<dbReference type="HAMAP" id="MF_01347">
    <property type="entry name" value="ATP_synth_beta_bact"/>
    <property type="match status" value="1"/>
</dbReference>
<dbReference type="InterPro" id="IPR003593">
    <property type="entry name" value="AAA+_ATPase"/>
</dbReference>
<dbReference type="InterPro" id="IPR055190">
    <property type="entry name" value="ATP-synt_VA_C"/>
</dbReference>
<dbReference type="InterPro" id="IPR005722">
    <property type="entry name" value="ATP_synth_F1_bsu"/>
</dbReference>
<dbReference type="InterPro" id="IPR020003">
    <property type="entry name" value="ATPase_a/bsu_AS"/>
</dbReference>
<dbReference type="InterPro" id="IPR050053">
    <property type="entry name" value="ATPase_alpha/beta_chains"/>
</dbReference>
<dbReference type="InterPro" id="IPR004100">
    <property type="entry name" value="ATPase_F1/V1/A1_a/bsu_N"/>
</dbReference>
<dbReference type="InterPro" id="IPR036121">
    <property type="entry name" value="ATPase_F1/V1/A1_a/bsu_N_sf"/>
</dbReference>
<dbReference type="InterPro" id="IPR000194">
    <property type="entry name" value="ATPase_F1/V1/A1_a/bsu_nucl-bd"/>
</dbReference>
<dbReference type="InterPro" id="IPR024034">
    <property type="entry name" value="ATPase_F1/V1_b/a_C"/>
</dbReference>
<dbReference type="InterPro" id="IPR027417">
    <property type="entry name" value="P-loop_NTPase"/>
</dbReference>
<dbReference type="NCBIfam" id="TIGR01039">
    <property type="entry name" value="atpD"/>
    <property type="match status" value="1"/>
</dbReference>
<dbReference type="PANTHER" id="PTHR15184">
    <property type="entry name" value="ATP SYNTHASE"/>
    <property type="match status" value="1"/>
</dbReference>
<dbReference type="PANTHER" id="PTHR15184:SF71">
    <property type="entry name" value="ATP SYNTHASE SUBUNIT BETA, MITOCHONDRIAL"/>
    <property type="match status" value="1"/>
</dbReference>
<dbReference type="Pfam" id="PF00006">
    <property type="entry name" value="ATP-synt_ab"/>
    <property type="match status" value="1"/>
</dbReference>
<dbReference type="Pfam" id="PF02874">
    <property type="entry name" value="ATP-synt_ab_N"/>
    <property type="match status" value="1"/>
</dbReference>
<dbReference type="Pfam" id="PF22919">
    <property type="entry name" value="ATP-synt_VA_C"/>
    <property type="match status" value="1"/>
</dbReference>
<dbReference type="SMART" id="SM00382">
    <property type="entry name" value="AAA"/>
    <property type="match status" value="1"/>
</dbReference>
<dbReference type="SUPFAM" id="SSF47917">
    <property type="entry name" value="C-terminal domain of alpha and beta subunits of F1 ATP synthase"/>
    <property type="match status" value="1"/>
</dbReference>
<dbReference type="SUPFAM" id="SSF50615">
    <property type="entry name" value="N-terminal domain of alpha and beta subunits of F1 ATP synthase"/>
    <property type="match status" value="1"/>
</dbReference>
<dbReference type="SUPFAM" id="SSF52540">
    <property type="entry name" value="P-loop containing nucleoside triphosphate hydrolases"/>
    <property type="match status" value="1"/>
</dbReference>
<dbReference type="PROSITE" id="PS00152">
    <property type="entry name" value="ATPASE_ALPHA_BETA"/>
    <property type="match status" value="1"/>
</dbReference>
<organism>
    <name type="scientific">Campylobacter hominis (strain ATCC BAA-381 / DSM 21671 / CCUG 45161 / LMG 19568 / NCTC 13146 / CH001A)</name>
    <dbReference type="NCBI Taxonomy" id="360107"/>
    <lineage>
        <taxon>Bacteria</taxon>
        <taxon>Pseudomonadati</taxon>
        <taxon>Campylobacterota</taxon>
        <taxon>Epsilonproteobacteria</taxon>
        <taxon>Campylobacterales</taxon>
        <taxon>Campylobacteraceae</taxon>
        <taxon>Campylobacter</taxon>
    </lineage>
</organism>
<accession>A7I177</accession>